<protein>
    <recommendedName>
        <fullName>Lysine-specific demethylase 4A</fullName>
        <ecNumber evidence="3">1.14.11.66</ecNumber>
        <ecNumber evidence="3">1.14.11.69</ecNumber>
    </recommendedName>
    <alternativeName>
        <fullName>JmjC domain-containing histone demethylation protein 3A</fullName>
    </alternativeName>
    <alternativeName>
        <fullName>Jumonji domain-containing protein 2A</fullName>
    </alternativeName>
    <alternativeName>
        <fullName evidence="11">[histone H3]-trimethyl-L-lysine(36) demethylase 4A</fullName>
    </alternativeName>
    <alternativeName>
        <fullName evidence="11">[histone H3]-trimethyl-L-lysine(9) demethylase 4A</fullName>
    </alternativeName>
</protein>
<dbReference type="EC" id="1.14.11.66" evidence="3"/>
<dbReference type="EC" id="1.14.11.69" evidence="3"/>
<dbReference type="EMBL" id="AK129187">
    <property type="protein sequence ID" value="BAC97997.1"/>
    <property type="status" value="ALT_INIT"/>
    <property type="molecule type" value="mRNA"/>
</dbReference>
<dbReference type="EMBL" id="AK054095">
    <property type="protein sequence ID" value="BAC35653.1"/>
    <property type="molecule type" value="mRNA"/>
</dbReference>
<dbReference type="EMBL" id="AK136085">
    <property type="protein sequence ID" value="BAE22812.1"/>
    <property type="molecule type" value="mRNA"/>
</dbReference>
<dbReference type="EMBL" id="AK145066">
    <property type="protein sequence ID" value="BAE26217.1"/>
    <property type="molecule type" value="mRNA"/>
</dbReference>
<dbReference type="EMBL" id="AK145947">
    <property type="protein sequence ID" value="BAE26776.1"/>
    <property type="molecule type" value="mRNA"/>
</dbReference>
<dbReference type="EMBL" id="AL626764">
    <property type="status" value="NOT_ANNOTATED_CDS"/>
    <property type="molecule type" value="Genomic_DNA"/>
</dbReference>
<dbReference type="EMBL" id="BC028866">
    <property type="protein sequence ID" value="AAH28866.1"/>
    <property type="molecule type" value="mRNA"/>
</dbReference>
<dbReference type="CCDS" id="CCDS51282.1">
    <molecule id="Q8BW72-1"/>
</dbReference>
<dbReference type="RefSeq" id="NP_001155295.1">
    <molecule id="Q8BW72-1"/>
    <property type="nucleotide sequence ID" value="NM_001161823.2"/>
</dbReference>
<dbReference type="RefSeq" id="NP_001413184.1">
    <molecule id="Q8BW72-1"/>
    <property type="nucleotide sequence ID" value="NM_001426255.1"/>
</dbReference>
<dbReference type="RefSeq" id="NP_001413185.1">
    <molecule id="Q8BW72-1"/>
    <property type="nucleotide sequence ID" value="NM_001426256.1"/>
</dbReference>
<dbReference type="RefSeq" id="NP_001413186.1">
    <molecule id="Q8BW72-1"/>
    <property type="nucleotide sequence ID" value="NM_001426257.1"/>
</dbReference>
<dbReference type="RefSeq" id="NP_759014.2">
    <property type="nucleotide sequence ID" value="NM_172382.2"/>
</dbReference>
<dbReference type="RefSeq" id="XP_006503073.1">
    <property type="nucleotide sequence ID" value="XM_006503010.2"/>
</dbReference>
<dbReference type="SMR" id="Q8BW72"/>
<dbReference type="BioGRID" id="230999">
    <property type="interactions" value="4"/>
</dbReference>
<dbReference type="FunCoup" id="Q8BW72">
    <property type="interactions" value="3565"/>
</dbReference>
<dbReference type="IntAct" id="Q8BW72">
    <property type="interactions" value="1"/>
</dbReference>
<dbReference type="STRING" id="10090.ENSMUSP00000102014"/>
<dbReference type="GlyGen" id="Q8BW72">
    <property type="glycosylation" value="1 site, 1 O-linked glycan (1 site)"/>
</dbReference>
<dbReference type="iPTMnet" id="Q8BW72"/>
<dbReference type="PhosphoSitePlus" id="Q8BW72"/>
<dbReference type="jPOST" id="Q8BW72"/>
<dbReference type="PaxDb" id="10090-ENSMUSP00000102014"/>
<dbReference type="PeptideAtlas" id="Q8BW72"/>
<dbReference type="ProteomicsDB" id="264987">
    <molecule id="Q8BW72-1"/>
</dbReference>
<dbReference type="ProteomicsDB" id="264988">
    <molecule id="Q8BW72-2"/>
</dbReference>
<dbReference type="Pumba" id="Q8BW72"/>
<dbReference type="DNASU" id="230674"/>
<dbReference type="Ensembl" id="ENSMUST00000097911.9">
    <molecule id="Q8BW72-1"/>
    <property type="protein sequence ID" value="ENSMUSP00000095524.3"/>
    <property type="gene ID" value="ENSMUSG00000033326.16"/>
</dbReference>
<dbReference type="Ensembl" id="ENSMUST00000106403.8">
    <molecule id="Q8BW72-1"/>
    <property type="protein sequence ID" value="ENSMUSP00000102011.2"/>
    <property type="gene ID" value="ENSMUSG00000033326.16"/>
</dbReference>
<dbReference type="Ensembl" id="ENSMUST00000106406.9">
    <molecule id="Q8BW72-1"/>
    <property type="protein sequence ID" value="ENSMUSP00000102014.3"/>
    <property type="gene ID" value="ENSMUSG00000033326.16"/>
</dbReference>
<dbReference type="GeneID" id="230674"/>
<dbReference type="KEGG" id="mmu:230674"/>
<dbReference type="UCSC" id="uc008ujn.2">
    <molecule id="Q8BW72-1"/>
    <property type="organism name" value="mouse"/>
</dbReference>
<dbReference type="AGR" id="MGI:2446210"/>
<dbReference type="CTD" id="9682"/>
<dbReference type="MGI" id="MGI:2446210">
    <property type="gene designation" value="Kdm4a"/>
</dbReference>
<dbReference type="VEuPathDB" id="HostDB:ENSMUSG00000033326"/>
<dbReference type="eggNOG" id="KOG0958">
    <property type="taxonomic scope" value="Eukaryota"/>
</dbReference>
<dbReference type="GeneTree" id="ENSGT00940000159643"/>
<dbReference type="HOGENOM" id="CLU_001442_0_1_1"/>
<dbReference type="InParanoid" id="Q8BW72"/>
<dbReference type="OMA" id="SGQYDMT"/>
<dbReference type="OrthoDB" id="9547406at2759"/>
<dbReference type="PhylomeDB" id="Q8BW72"/>
<dbReference type="TreeFam" id="TF106449"/>
<dbReference type="BRENDA" id="1.14.11.66">
    <property type="organism ID" value="3474"/>
</dbReference>
<dbReference type="BRENDA" id="1.14.11.69">
    <property type="organism ID" value="3474"/>
</dbReference>
<dbReference type="Reactome" id="R-MMU-3214842">
    <property type="pathway name" value="HDMs demethylate histones"/>
</dbReference>
<dbReference type="Reactome" id="R-MMU-5693565">
    <property type="pathway name" value="Recruitment and ATM-mediated phosphorylation of repair and signaling proteins at DNA double strand breaks"/>
</dbReference>
<dbReference type="BioGRID-ORCS" id="230674">
    <property type="hits" value="8 hits in 82 CRISPR screens"/>
</dbReference>
<dbReference type="ChiTaRS" id="Kdm4a">
    <property type="organism name" value="mouse"/>
</dbReference>
<dbReference type="PRO" id="PR:Q8BW72"/>
<dbReference type="Proteomes" id="UP000000589">
    <property type="component" value="Chromosome 4"/>
</dbReference>
<dbReference type="RNAct" id="Q8BW72">
    <property type="molecule type" value="protein"/>
</dbReference>
<dbReference type="Bgee" id="ENSMUSG00000033326">
    <property type="expression patterns" value="Expressed in manus and 227 other cell types or tissues"/>
</dbReference>
<dbReference type="ExpressionAtlas" id="Q8BW72">
    <property type="expression patterns" value="baseline and differential"/>
</dbReference>
<dbReference type="GO" id="GO:0005829">
    <property type="term" value="C:cytosol"/>
    <property type="evidence" value="ECO:0007669"/>
    <property type="project" value="Ensembl"/>
</dbReference>
<dbReference type="GO" id="GO:0001650">
    <property type="term" value="C:fibrillar center"/>
    <property type="evidence" value="ECO:0007669"/>
    <property type="project" value="Ensembl"/>
</dbReference>
<dbReference type="GO" id="GO:0005654">
    <property type="term" value="C:nucleoplasm"/>
    <property type="evidence" value="ECO:0007669"/>
    <property type="project" value="Ensembl"/>
</dbReference>
<dbReference type="GO" id="GO:0005721">
    <property type="term" value="C:pericentric heterochromatin"/>
    <property type="evidence" value="ECO:0000314"/>
    <property type="project" value="MGI"/>
</dbReference>
<dbReference type="GO" id="GO:0032452">
    <property type="term" value="F:histone demethylase activity"/>
    <property type="evidence" value="ECO:0000314"/>
    <property type="project" value="MGI"/>
</dbReference>
<dbReference type="GO" id="GO:0140681">
    <property type="term" value="F:histone H3K36me2/H3K36me3 demethylase activity"/>
    <property type="evidence" value="ECO:0007669"/>
    <property type="project" value="UniProtKB-EC"/>
</dbReference>
<dbReference type="GO" id="GO:0032454">
    <property type="term" value="F:histone H3K9 demethylase activity"/>
    <property type="evidence" value="ECO:0000314"/>
    <property type="project" value="MGI"/>
</dbReference>
<dbReference type="GO" id="GO:0140684">
    <property type="term" value="F:histone H3K9me2/H3K9me3 demethylase activity"/>
    <property type="evidence" value="ECO:0007669"/>
    <property type="project" value="UniProtKB-EC"/>
</dbReference>
<dbReference type="GO" id="GO:0140005">
    <property type="term" value="F:histone H4K20me2 reader activity"/>
    <property type="evidence" value="ECO:0000250"/>
    <property type="project" value="UniProtKB"/>
</dbReference>
<dbReference type="GO" id="GO:0031625">
    <property type="term" value="F:ubiquitin protein ligase binding"/>
    <property type="evidence" value="ECO:0007669"/>
    <property type="project" value="Ensembl"/>
</dbReference>
<dbReference type="GO" id="GO:0008270">
    <property type="term" value="F:zinc ion binding"/>
    <property type="evidence" value="ECO:0007669"/>
    <property type="project" value="UniProtKB-KW"/>
</dbReference>
<dbReference type="GO" id="GO:0014898">
    <property type="term" value="P:cardiac muscle hypertrophy in response to stress"/>
    <property type="evidence" value="ECO:0000315"/>
    <property type="project" value="MGI"/>
</dbReference>
<dbReference type="GO" id="GO:0010507">
    <property type="term" value="P:negative regulation of autophagy"/>
    <property type="evidence" value="ECO:0007669"/>
    <property type="project" value="Ensembl"/>
</dbReference>
<dbReference type="GO" id="GO:0045892">
    <property type="term" value="P:negative regulation of DNA-templated transcription"/>
    <property type="evidence" value="ECO:0007669"/>
    <property type="project" value="Ensembl"/>
</dbReference>
<dbReference type="GO" id="GO:0010629">
    <property type="term" value="P:negative regulation of gene expression"/>
    <property type="evidence" value="ECO:0007669"/>
    <property type="project" value="Ensembl"/>
</dbReference>
<dbReference type="CDD" id="cd15713">
    <property type="entry name" value="ePHD_JMJD2A"/>
    <property type="match status" value="1"/>
</dbReference>
<dbReference type="CDD" id="cd20463">
    <property type="entry name" value="Tudor_JMJD2A_rpt1"/>
    <property type="match status" value="1"/>
</dbReference>
<dbReference type="CDD" id="cd20466">
    <property type="entry name" value="Tudor_JMJD2A_rpt2"/>
    <property type="match status" value="1"/>
</dbReference>
<dbReference type="FunFam" id="2.60.120.650:FF:000048">
    <property type="entry name" value="Lysine-specific demethylase 4A"/>
    <property type="match status" value="1"/>
</dbReference>
<dbReference type="FunFam" id="3.30.40.10:FF:000236">
    <property type="entry name" value="Lysine-specific demethylase 4A"/>
    <property type="match status" value="1"/>
</dbReference>
<dbReference type="FunFam" id="3.30.40.10:FF:000029">
    <property type="entry name" value="lysine-specific demethylase 4C isoform X1"/>
    <property type="match status" value="1"/>
</dbReference>
<dbReference type="FunFam" id="3.10.330.70:FF:000001">
    <property type="entry name" value="Putative lysine-specific demethylase 4a"/>
    <property type="match status" value="1"/>
</dbReference>
<dbReference type="Gene3D" id="2.30.30.140">
    <property type="match status" value="1"/>
</dbReference>
<dbReference type="Gene3D" id="3.10.330.70">
    <property type="match status" value="1"/>
</dbReference>
<dbReference type="Gene3D" id="2.60.120.650">
    <property type="entry name" value="Cupin"/>
    <property type="match status" value="1"/>
</dbReference>
<dbReference type="Gene3D" id="3.30.40.10">
    <property type="entry name" value="Zinc/RING finger domain, C3HC4 (zinc finger)"/>
    <property type="match status" value="2"/>
</dbReference>
<dbReference type="InterPro" id="IPR034732">
    <property type="entry name" value="EPHD"/>
</dbReference>
<dbReference type="InterPro" id="IPR003347">
    <property type="entry name" value="JmjC_dom"/>
</dbReference>
<dbReference type="InterPro" id="IPR047482">
    <property type="entry name" value="JMJD2A_ePHD"/>
</dbReference>
<dbReference type="InterPro" id="IPR003349">
    <property type="entry name" value="JmjN"/>
</dbReference>
<dbReference type="InterPro" id="IPR040477">
    <property type="entry name" value="KDM4-like_Tudor"/>
</dbReference>
<dbReference type="InterPro" id="IPR002999">
    <property type="entry name" value="Tudor"/>
</dbReference>
<dbReference type="InterPro" id="IPR047479">
    <property type="entry name" value="Tudor_KDM4A_rpt1"/>
</dbReference>
<dbReference type="InterPro" id="IPR047481">
    <property type="entry name" value="Tudor_KDM4A_rpt2"/>
</dbReference>
<dbReference type="InterPro" id="IPR011011">
    <property type="entry name" value="Znf_FYVE_PHD"/>
</dbReference>
<dbReference type="InterPro" id="IPR001965">
    <property type="entry name" value="Znf_PHD"/>
</dbReference>
<dbReference type="InterPro" id="IPR019787">
    <property type="entry name" value="Znf_PHD-finger"/>
</dbReference>
<dbReference type="InterPro" id="IPR013083">
    <property type="entry name" value="Znf_RING/FYVE/PHD"/>
</dbReference>
<dbReference type="PANTHER" id="PTHR10694">
    <property type="entry name" value="LYSINE-SPECIFIC DEMETHYLASE"/>
    <property type="match status" value="1"/>
</dbReference>
<dbReference type="PANTHER" id="PTHR10694:SF119">
    <property type="entry name" value="LYSINE-SPECIFIC DEMETHYLASE 4A"/>
    <property type="match status" value="1"/>
</dbReference>
<dbReference type="Pfam" id="PF02373">
    <property type="entry name" value="JmjC"/>
    <property type="match status" value="1"/>
</dbReference>
<dbReference type="Pfam" id="PF02375">
    <property type="entry name" value="JmjN"/>
    <property type="match status" value="1"/>
</dbReference>
<dbReference type="Pfam" id="PF13831">
    <property type="entry name" value="PHD_2"/>
    <property type="match status" value="1"/>
</dbReference>
<dbReference type="Pfam" id="PF18104">
    <property type="entry name" value="Tudor_2"/>
    <property type="match status" value="2"/>
</dbReference>
<dbReference type="Pfam" id="PF13832">
    <property type="entry name" value="zf-HC5HC2H_2"/>
    <property type="match status" value="1"/>
</dbReference>
<dbReference type="SMART" id="SM00558">
    <property type="entry name" value="JmjC"/>
    <property type="match status" value="1"/>
</dbReference>
<dbReference type="SMART" id="SM00545">
    <property type="entry name" value="JmjN"/>
    <property type="match status" value="1"/>
</dbReference>
<dbReference type="SMART" id="SM00249">
    <property type="entry name" value="PHD"/>
    <property type="match status" value="2"/>
</dbReference>
<dbReference type="SMART" id="SM00333">
    <property type="entry name" value="TUDOR"/>
    <property type="match status" value="2"/>
</dbReference>
<dbReference type="SUPFAM" id="SSF51197">
    <property type="entry name" value="Clavaminate synthase-like"/>
    <property type="match status" value="1"/>
</dbReference>
<dbReference type="SUPFAM" id="SSF57903">
    <property type="entry name" value="FYVE/PHD zinc finger"/>
    <property type="match status" value="1"/>
</dbReference>
<dbReference type="SUPFAM" id="SSF63748">
    <property type="entry name" value="Tudor/PWWP/MBT"/>
    <property type="match status" value="2"/>
</dbReference>
<dbReference type="PROSITE" id="PS51805">
    <property type="entry name" value="EPHD"/>
    <property type="match status" value="1"/>
</dbReference>
<dbReference type="PROSITE" id="PS51184">
    <property type="entry name" value="JMJC"/>
    <property type="match status" value="1"/>
</dbReference>
<dbReference type="PROSITE" id="PS51183">
    <property type="entry name" value="JMJN"/>
    <property type="match status" value="1"/>
</dbReference>
<evidence type="ECO:0000250" key="1"/>
<evidence type="ECO:0000250" key="2">
    <source>
        <dbReference type="UniProtKB" id="B2RXH2"/>
    </source>
</evidence>
<evidence type="ECO:0000250" key="3">
    <source>
        <dbReference type="UniProtKB" id="O75164"/>
    </source>
</evidence>
<evidence type="ECO:0000255" key="4">
    <source>
        <dbReference type="PROSITE-ProRule" id="PRU00537"/>
    </source>
</evidence>
<evidence type="ECO:0000255" key="5">
    <source>
        <dbReference type="PROSITE-ProRule" id="PRU00538"/>
    </source>
</evidence>
<evidence type="ECO:0000255" key="6">
    <source>
        <dbReference type="PROSITE-ProRule" id="PRU01146"/>
    </source>
</evidence>
<evidence type="ECO:0000256" key="7">
    <source>
        <dbReference type="SAM" id="MobiDB-lite"/>
    </source>
</evidence>
<evidence type="ECO:0000269" key="8">
    <source>
    </source>
</evidence>
<evidence type="ECO:0000269" key="9">
    <source>
    </source>
</evidence>
<evidence type="ECO:0000303" key="10">
    <source>
    </source>
</evidence>
<evidence type="ECO:0000305" key="11"/>
<proteinExistence type="evidence at protein level"/>
<accession>Q8BW72</accession>
<accession>A2A8L8</accession>
<accession>Q3UKM5</accession>
<accession>Q3UM81</accession>
<accession>Q3UWV2</accession>
<accession>Q6ZQ72</accession>
<accession>Q8K137</accession>
<sequence>MASESETLNPSARIMTFYPTMEEFRNFSRYIAYIESQGAHRAGLAKVVPPKEWKPRTSYDDIDDLVIPAPIQQLVTGQSGLFTQYNIQKKAMTVREFRKIANSDKYCTPRYSEFEELERKYWKNLTFNPPIYGADVNGTLYEQHVDEWNIGRLKTILDLVEKESGITIEGVNTPYLYFGMWKTSFAWHTEDMDLYSINYLHFGEPKSWYSVPPEHGKRLERLAKGFFPGSAQSCEAFLRHKMTLISPLMLKKYGIPFDKVTQEAGEFMITFPYGYHAGFNHGFNCAESTNFATRRWIEYGKQAVLCSCRKDMVKISMDVFVRRFQPERYKLWKAGKDSMVIDHTLPTPEAAEFLKDSGGLTPRAGSEECPEEDVEAADQGEEGDVKRSLAKHRIGTKRHRVCLEIPQEVSQSELFPKEELSSGQYEMTECPATLAPVRPTHSSVRQVEDSLPFPDYSDPTEVKFEELKNVKLEEEDEEDEPEAAALDLSVNPASVGGRLVFSGSKKKSSSSLGSTSSQDSVSSDSETAESVSCQGQEKTGVLTVHSYARGDGKAATGEPSVKKKRSAPRSISEQELAEVADEYMLSLEENKKTKGRRQPLSKLPRHHPLVLQECGSDDETSEQLTPEEEAEETEAWAKPLSQLWQNRPPNFEAEKEFNEIMAQQAPHCAVCMIFQTYHQVEFGAFSQSCGDASEPAAQTQRTKPLIPEMCFTTTGCSTDINLSTPYLEEDGTSMLVSCKKCSVRVHASCYGVPPAKASEEWMCSRCSANALEEDCCLCSLRGGALQRANDDRWVHVSCAVAILEARFVNIAERSPVDVSKIPLPRFKLKCVFCKKRRKRNAGCCVQCSHGRCPTAFHVSCAQAAGVMMQPDDWPFVVFITCFRHKIPNLERAKGALLSITAGQKVISKHKNGRFYQCEVVRLTTETFYEVNFDDGSFSDNLYPEDIVSQDCLQLGPPAEGEVVQVRWTDGQVYGAKFVASHPIQMYQVEFEDGSQLVVKRDDVYTLDEELPKRVKSRLSVASDMRFNEIFTEKEVKQEKKRQRVINSRYREDYIEPALYRAIME</sequence>
<name>KDM4A_MOUSE</name>
<keyword id="KW-0007">Acetylation</keyword>
<keyword id="KW-0025">Alternative splicing</keyword>
<keyword id="KW-0156">Chromatin regulator</keyword>
<keyword id="KW-0223">Dioxygenase</keyword>
<keyword id="KW-0903">Direct protein sequencing</keyword>
<keyword id="KW-0408">Iron</keyword>
<keyword id="KW-0479">Metal-binding</keyword>
<keyword id="KW-0539">Nucleus</keyword>
<keyword id="KW-0560">Oxidoreductase</keyword>
<keyword id="KW-0597">Phosphoprotein</keyword>
<keyword id="KW-1185">Reference proteome</keyword>
<keyword id="KW-0677">Repeat</keyword>
<keyword id="KW-0804">Transcription</keyword>
<keyword id="KW-0805">Transcription regulation</keyword>
<keyword id="KW-0832">Ubl conjugation</keyword>
<keyword id="KW-0862">Zinc</keyword>
<keyword id="KW-0863">Zinc-finger</keyword>
<organism>
    <name type="scientific">Mus musculus</name>
    <name type="common">Mouse</name>
    <dbReference type="NCBI Taxonomy" id="10090"/>
    <lineage>
        <taxon>Eukaryota</taxon>
        <taxon>Metazoa</taxon>
        <taxon>Chordata</taxon>
        <taxon>Craniata</taxon>
        <taxon>Vertebrata</taxon>
        <taxon>Euteleostomi</taxon>
        <taxon>Mammalia</taxon>
        <taxon>Eutheria</taxon>
        <taxon>Euarchontoglires</taxon>
        <taxon>Glires</taxon>
        <taxon>Rodentia</taxon>
        <taxon>Myomorpha</taxon>
        <taxon>Muroidea</taxon>
        <taxon>Muridae</taxon>
        <taxon>Murinae</taxon>
        <taxon>Mus</taxon>
        <taxon>Mus</taxon>
    </lineage>
</organism>
<feature type="initiator methionine" description="Removed" evidence="3">
    <location>
        <position position="1"/>
    </location>
</feature>
<feature type="chain" id="PRO_0000183173" description="Lysine-specific demethylase 4A">
    <location>
        <begin position="2"/>
        <end position="1064"/>
    </location>
</feature>
<feature type="domain" description="JmjN" evidence="4">
    <location>
        <begin position="14"/>
        <end position="56"/>
    </location>
</feature>
<feature type="domain" description="JmjC" evidence="5">
    <location>
        <begin position="142"/>
        <end position="308"/>
    </location>
</feature>
<feature type="domain" description="Tudor 1">
    <location>
        <begin position="897"/>
        <end position="954"/>
    </location>
</feature>
<feature type="domain" description="Tudor 2">
    <location>
        <begin position="955"/>
        <end position="1011"/>
    </location>
</feature>
<feature type="zinc finger region" description="PHD-type 1">
    <location>
        <begin position="709"/>
        <end position="767"/>
    </location>
</feature>
<feature type="zinc finger region" description="C2HC pre-PHD-type" evidence="6">
    <location>
        <begin position="772"/>
        <end position="805"/>
    </location>
</feature>
<feature type="zinc finger region" description="PHD-type 2" evidence="6">
    <location>
        <begin position="828"/>
        <end position="885"/>
    </location>
</feature>
<feature type="region of interest" description="Disordered" evidence="7">
    <location>
        <begin position="354"/>
        <end position="384"/>
    </location>
</feature>
<feature type="region of interest" description="Disordered" evidence="7">
    <location>
        <begin position="434"/>
        <end position="489"/>
    </location>
</feature>
<feature type="region of interest" description="Disordered" evidence="7">
    <location>
        <begin position="502"/>
        <end position="537"/>
    </location>
</feature>
<feature type="region of interest" description="Disordered" evidence="7">
    <location>
        <begin position="549"/>
        <end position="573"/>
    </location>
</feature>
<feature type="region of interest" description="Disordered" evidence="7">
    <location>
        <begin position="590"/>
        <end position="643"/>
    </location>
</feature>
<feature type="region of interest" description="Interaction with NCOR1" evidence="1">
    <location>
        <begin position="597"/>
        <end position="638"/>
    </location>
</feature>
<feature type="compositionally biased region" description="Acidic residues" evidence="7">
    <location>
        <begin position="368"/>
        <end position="382"/>
    </location>
</feature>
<feature type="compositionally biased region" description="Basic and acidic residues" evidence="7">
    <location>
        <begin position="460"/>
        <end position="472"/>
    </location>
</feature>
<feature type="compositionally biased region" description="Acidic residues" evidence="7">
    <location>
        <begin position="473"/>
        <end position="482"/>
    </location>
</feature>
<feature type="compositionally biased region" description="Low complexity" evidence="7">
    <location>
        <begin position="509"/>
        <end position="525"/>
    </location>
</feature>
<feature type="compositionally biased region" description="Polar residues" evidence="7">
    <location>
        <begin position="528"/>
        <end position="537"/>
    </location>
</feature>
<feature type="compositionally biased region" description="Basic residues" evidence="7">
    <location>
        <begin position="593"/>
        <end position="608"/>
    </location>
</feature>
<feature type="compositionally biased region" description="Acidic residues" evidence="7">
    <location>
        <begin position="615"/>
        <end position="634"/>
    </location>
</feature>
<feature type="binding site" evidence="3">
    <location>
        <position position="132"/>
    </location>
    <ligand>
        <name>2-oxoglutarate</name>
        <dbReference type="ChEBI" id="CHEBI:16810"/>
    </ligand>
</feature>
<feature type="binding site" evidence="5">
    <location>
        <position position="188"/>
    </location>
    <ligand>
        <name>Fe cation</name>
        <dbReference type="ChEBI" id="CHEBI:24875"/>
        <note>catalytic</note>
    </ligand>
</feature>
<feature type="binding site" evidence="5">
    <location>
        <position position="190"/>
    </location>
    <ligand>
        <name>Fe cation</name>
        <dbReference type="ChEBI" id="CHEBI:24875"/>
        <note>catalytic</note>
    </ligand>
</feature>
<feature type="binding site" evidence="3">
    <location>
        <position position="198"/>
    </location>
    <ligand>
        <name>2-oxoglutarate</name>
        <dbReference type="ChEBI" id="CHEBI:16810"/>
    </ligand>
</feature>
<feature type="binding site" evidence="3">
    <location>
        <position position="206"/>
    </location>
    <ligand>
        <name>2-oxoglutarate</name>
        <dbReference type="ChEBI" id="CHEBI:16810"/>
    </ligand>
</feature>
<feature type="binding site" evidence="3">
    <location>
        <position position="234"/>
    </location>
    <ligand>
        <name>Zn(2+)</name>
        <dbReference type="ChEBI" id="CHEBI:29105"/>
    </ligand>
</feature>
<feature type="binding site" evidence="3">
    <location>
        <position position="240"/>
    </location>
    <ligand>
        <name>Zn(2+)</name>
        <dbReference type="ChEBI" id="CHEBI:29105"/>
    </ligand>
</feature>
<feature type="binding site" evidence="2">
    <location>
        <position position="241"/>
    </location>
    <ligand>
        <name>2-oxoglutarate</name>
        <dbReference type="ChEBI" id="CHEBI:16810"/>
    </ligand>
</feature>
<feature type="binding site" evidence="5">
    <location>
        <position position="276"/>
    </location>
    <ligand>
        <name>Fe cation</name>
        <dbReference type="ChEBI" id="CHEBI:24875"/>
        <note>catalytic</note>
    </ligand>
</feature>
<feature type="binding site" evidence="3">
    <location>
        <position position="306"/>
    </location>
    <ligand>
        <name>Zn(2+)</name>
        <dbReference type="ChEBI" id="CHEBI:29105"/>
    </ligand>
</feature>
<feature type="binding site" evidence="3">
    <location>
        <position position="308"/>
    </location>
    <ligand>
        <name>Zn(2+)</name>
        <dbReference type="ChEBI" id="CHEBI:29105"/>
    </ligand>
</feature>
<feature type="site" description="Histone H3K4me3 binding" evidence="1">
    <location>
        <position position="945"/>
    </location>
</feature>
<feature type="site" description="Histone H3K4me3 binding" evidence="1">
    <location>
        <position position="967"/>
    </location>
</feature>
<feature type="site" description="Histone H3K4me3 binding" evidence="1">
    <location>
        <position position="973"/>
    </location>
</feature>
<feature type="modified residue" description="N-acetylalanine" evidence="3">
    <location>
        <position position="2"/>
    </location>
</feature>
<feature type="modified residue" description="Phosphoserine" evidence="3">
    <location>
        <position position="523"/>
    </location>
</feature>
<feature type="splice variant" id="VSP_016144" description="In isoform 2." evidence="10">
    <original>SQDCLQLGPPAEGEVVQVRWTDGQVYGAKFVASHPIQMYQVEFEDGSQLVVKRDDVYTLDEELPKRVKSRLSVASDMRFNEIFTEK</original>
    <variation>MSESGFWQHFGSSGTSSCYCRLDDCGLFACPWSVSKQKEPLFPGSLSRKSGHAGALSFPEEFRGVSVPCSPLKYAYISDQIISNSI</variation>
    <location>
        <begin position="948"/>
        <end position="1033"/>
    </location>
</feature>
<feature type="splice variant" id="VSP_016145" description="In isoform 2." evidence="10">
    <location>
        <begin position="1034"/>
        <end position="1064"/>
    </location>
</feature>
<feature type="sequence conflict" description="In Ref. 1; BAC97997, 2; BAE26217 and 4; AAH28866." evidence="11" ref="1 2 4">
    <original>M</original>
    <variation>T</variation>
    <location>
        <position position="339"/>
    </location>
</feature>
<feature type="sequence conflict" description="In Ref. 2; BAE26776." evidence="11" ref="2">
    <original>D</original>
    <variation>G</variation>
    <location>
        <position position="1007"/>
    </location>
</feature>
<reference key="1">
    <citation type="journal article" date="2003" name="DNA Res.">
        <title>Prediction of the coding sequences of mouse homologues of KIAA gene: III. The complete nucleotide sequences of 500 mouse KIAA-homologous cDNAs identified by screening of terminal sequences of cDNA clones randomly sampled from size-fractionated libraries.</title>
        <authorList>
            <person name="Okazaki N."/>
            <person name="Kikuno R."/>
            <person name="Ohara R."/>
            <person name="Inamoto S."/>
            <person name="Koseki H."/>
            <person name="Hiraoka S."/>
            <person name="Saga Y."/>
            <person name="Nagase T."/>
            <person name="Ohara O."/>
            <person name="Koga H."/>
        </authorList>
    </citation>
    <scope>NUCLEOTIDE SEQUENCE [LARGE SCALE MRNA] (ISOFORM 1)</scope>
    <source>
        <tissue>Embryonic tail</tissue>
    </source>
</reference>
<reference key="2">
    <citation type="journal article" date="2005" name="Science">
        <title>The transcriptional landscape of the mammalian genome.</title>
        <authorList>
            <person name="Carninci P."/>
            <person name="Kasukawa T."/>
            <person name="Katayama S."/>
            <person name="Gough J."/>
            <person name="Frith M.C."/>
            <person name="Maeda N."/>
            <person name="Oyama R."/>
            <person name="Ravasi T."/>
            <person name="Lenhard B."/>
            <person name="Wells C."/>
            <person name="Kodzius R."/>
            <person name="Shimokawa K."/>
            <person name="Bajic V.B."/>
            <person name="Brenner S.E."/>
            <person name="Batalov S."/>
            <person name="Forrest A.R."/>
            <person name="Zavolan M."/>
            <person name="Davis M.J."/>
            <person name="Wilming L.G."/>
            <person name="Aidinis V."/>
            <person name="Allen J.E."/>
            <person name="Ambesi-Impiombato A."/>
            <person name="Apweiler R."/>
            <person name="Aturaliya R.N."/>
            <person name="Bailey T.L."/>
            <person name="Bansal M."/>
            <person name="Baxter L."/>
            <person name="Beisel K.W."/>
            <person name="Bersano T."/>
            <person name="Bono H."/>
            <person name="Chalk A.M."/>
            <person name="Chiu K.P."/>
            <person name="Choudhary V."/>
            <person name="Christoffels A."/>
            <person name="Clutterbuck D.R."/>
            <person name="Crowe M.L."/>
            <person name="Dalla E."/>
            <person name="Dalrymple B.P."/>
            <person name="de Bono B."/>
            <person name="Della Gatta G."/>
            <person name="di Bernardo D."/>
            <person name="Down T."/>
            <person name="Engstrom P."/>
            <person name="Fagiolini M."/>
            <person name="Faulkner G."/>
            <person name="Fletcher C.F."/>
            <person name="Fukushima T."/>
            <person name="Furuno M."/>
            <person name="Futaki S."/>
            <person name="Gariboldi M."/>
            <person name="Georgii-Hemming P."/>
            <person name="Gingeras T.R."/>
            <person name="Gojobori T."/>
            <person name="Green R.E."/>
            <person name="Gustincich S."/>
            <person name="Harbers M."/>
            <person name="Hayashi Y."/>
            <person name="Hensch T.K."/>
            <person name="Hirokawa N."/>
            <person name="Hill D."/>
            <person name="Huminiecki L."/>
            <person name="Iacono M."/>
            <person name="Ikeo K."/>
            <person name="Iwama A."/>
            <person name="Ishikawa T."/>
            <person name="Jakt M."/>
            <person name="Kanapin A."/>
            <person name="Katoh M."/>
            <person name="Kawasawa Y."/>
            <person name="Kelso J."/>
            <person name="Kitamura H."/>
            <person name="Kitano H."/>
            <person name="Kollias G."/>
            <person name="Krishnan S.P."/>
            <person name="Kruger A."/>
            <person name="Kummerfeld S.K."/>
            <person name="Kurochkin I.V."/>
            <person name="Lareau L.F."/>
            <person name="Lazarevic D."/>
            <person name="Lipovich L."/>
            <person name="Liu J."/>
            <person name="Liuni S."/>
            <person name="McWilliam S."/>
            <person name="Madan Babu M."/>
            <person name="Madera M."/>
            <person name="Marchionni L."/>
            <person name="Matsuda H."/>
            <person name="Matsuzawa S."/>
            <person name="Miki H."/>
            <person name="Mignone F."/>
            <person name="Miyake S."/>
            <person name="Morris K."/>
            <person name="Mottagui-Tabar S."/>
            <person name="Mulder N."/>
            <person name="Nakano N."/>
            <person name="Nakauchi H."/>
            <person name="Ng P."/>
            <person name="Nilsson R."/>
            <person name="Nishiguchi S."/>
            <person name="Nishikawa S."/>
            <person name="Nori F."/>
            <person name="Ohara O."/>
            <person name="Okazaki Y."/>
            <person name="Orlando V."/>
            <person name="Pang K.C."/>
            <person name="Pavan W.J."/>
            <person name="Pavesi G."/>
            <person name="Pesole G."/>
            <person name="Petrovsky N."/>
            <person name="Piazza S."/>
            <person name="Reed J."/>
            <person name="Reid J.F."/>
            <person name="Ring B.Z."/>
            <person name="Ringwald M."/>
            <person name="Rost B."/>
            <person name="Ruan Y."/>
            <person name="Salzberg S.L."/>
            <person name="Sandelin A."/>
            <person name="Schneider C."/>
            <person name="Schoenbach C."/>
            <person name="Sekiguchi K."/>
            <person name="Semple C.A."/>
            <person name="Seno S."/>
            <person name="Sessa L."/>
            <person name="Sheng Y."/>
            <person name="Shibata Y."/>
            <person name="Shimada H."/>
            <person name="Shimada K."/>
            <person name="Silva D."/>
            <person name="Sinclair B."/>
            <person name="Sperling S."/>
            <person name="Stupka E."/>
            <person name="Sugiura K."/>
            <person name="Sultana R."/>
            <person name="Takenaka Y."/>
            <person name="Taki K."/>
            <person name="Tammoja K."/>
            <person name="Tan S.L."/>
            <person name="Tang S."/>
            <person name="Taylor M.S."/>
            <person name="Tegner J."/>
            <person name="Teichmann S.A."/>
            <person name="Ueda H.R."/>
            <person name="van Nimwegen E."/>
            <person name="Verardo R."/>
            <person name="Wei C.L."/>
            <person name="Yagi K."/>
            <person name="Yamanishi H."/>
            <person name="Zabarovsky E."/>
            <person name="Zhu S."/>
            <person name="Zimmer A."/>
            <person name="Hide W."/>
            <person name="Bult C."/>
            <person name="Grimmond S.M."/>
            <person name="Teasdale R.D."/>
            <person name="Liu E.T."/>
            <person name="Brusic V."/>
            <person name="Quackenbush J."/>
            <person name="Wahlestedt C."/>
            <person name="Mattick J.S."/>
            <person name="Hume D.A."/>
            <person name="Kai C."/>
            <person name="Sasaki D."/>
            <person name="Tomaru Y."/>
            <person name="Fukuda S."/>
            <person name="Kanamori-Katayama M."/>
            <person name="Suzuki M."/>
            <person name="Aoki J."/>
            <person name="Arakawa T."/>
            <person name="Iida J."/>
            <person name="Imamura K."/>
            <person name="Itoh M."/>
            <person name="Kato T."/>
            <person name="Kawaji H."/>
            <person name="Kawagashira N."/>
            <person name="Kawashima T."/>
            <person name="Kojima M."/>
            <person name="Kondo S."/>
            <person name="Konno H."/>
            <person name="Nakano K."/>
            <person name="Ninomiya N."/>
            <person name="Nishio T."/>
            <person name="Okada M."/>
            <person name="Plessy C."/>
            <person name="Shibata K."/>
            <person name="Shiraki T."/>
            <person name="Suzuki S."/>
            <person name="Tagami M."/>
            <person name="Waki K."/>
            <person name="Watahiki A."/>
            <person name="Okamura-Oho Y."/>
            <person name="Suzuki H."/>
            <person name="Kawai J."/>
            <person name="Hayashizaki Y."/>
        </authorList>
    </citation>
    <scope>NUCLEOTIDE SEQUENCE [LARGE SCALE MRNA] (ISOFORM 1)</scope>
    <source>
        <strain>C57BL/6J</strain>
        <tissue>Embryo</tissue>
        <tissue>Mammary gland</tissue>
        <tissue>Oviduct</tissue>
        <tissue>Placenta</tissue>
    </source>
</reference>
<reference key="3">
    <citation type="journal article" date="2009" name="PLoS Biol.">
        <title>Lineage-specific biology revealed by a finished genome assembly of the mouse.</title>
        <authorList>
            <person name="Church D.M."/>
            <person name="Goodstadt L."/>
            <person name="Hillier L.W."/>
            <person name="Zody M.C."/>
            <person name="Goldstein S."/>
            <person name="She X."/>
            <person name="Bult C.J."/>
            <person name="Agarwala R."/>
            <person name="Cherry J.L."/>
            <person name="DiCuccio M."/>
            <person name="Hlavina W."/>
            <person name="Kapustin Y."/>
            <person name="Meric P."/>
            <person name="Maglott D."/>
            <person name="Birtle Z."/>
            <person name="Marques A.C."/>
            <person name="Graves T."/>
            <person name="Zhou S."/>
            <person name="Teague B."/>
            <person name="Potamousis K."/>
            <person name="Churas C."/>
            <person name="Place M."/>
            <person name="Herschleb J."/>
            <person name="Runnheim R."/>
            <person name="Forrest D."/>
            <person name="Amos-Landgraf J."/>
            <person name="Schwartz D.C."/>
            <person name="Cheng Z."/>
            <person name="Lindblad-Toh K."/>
            <person name="Eichler E.E."/>
            <person name="Ponting C.P."/>
        </authorList>
    </citation>
    <scope>NUCLEOTIDE SEQUENCE [LARGE SCALE GENOMIC DNA]</scope>
    <source>
        <strain>C57BL/6J</strain>
    </source>
</reference>
<reference key="4">
    <citation type="journal article" date="2004" name="Genome Res.">
        <title>The status, quality, and expansion of the NIH full-length cDNA project: the Mammalian Gene Collection (MGC).</title>
        <authorList>
            <consortium name="The MGC Project Team"/>
        </authorList>
    </citation>
    <scope>NUCLEOTIDE SEQUENCE [LARGE SCALE MRNA] (ISOFORM 2)</scope>
    <source>
        <strain>FVB/N</strain>
        <tissue>Colon</tissue>
    </source>
</reference>
<reference key="5">
    <citation type="submission" date="2009-01" db="UniProtKB">
        <authorList>
            <person name="Lubec G."/>
            <person name="Sunyer B."/>
            <person name="Chen W.-Q."/>
        </authorList>
    </citation>
    <scope>PROTEIN SEQUENCE OF 499-505</scope>
    <scope>IDENTIFICATION BY MASS SPECTROMETRY</scope>
    <source>
        <strain>OF1</strain>
        <tissue>Hippocampus</tissue>
    </source>
</reference>
<reference key="6">
    <citation type="journal article" date="2005" name="Mol. Cell. Biol.">
        <title>JMJD2A is a novel N-CoR-interacting protein and is involved in repression of the human transcription factor achaete scute-like homologue 2 (ASCL2/Hash2).</title>
        <authorList>
            <person name="Zhang D."/>
            <person name="Yoon H.-G."/>
            <person name="Wong J."/>
        </authorList>
    </citation>
    <scope>TISSUE SPECIFICITY</scope>
</reference>
<reference key="7">
    <citation type="journal article" date="2014" name="Cell Rep.">
        <title>GPS2/KDM4A pioneering activity regulates promoter-specific recruitment of PPARgamma.</title>
        <authorList>
            <person name="Cardamone M.D."/>
            <person name="Tanasa B."/>
            <person name="Chan M."/>
            <person name="Cederquist C.T."/>
            <person name="Andricovich J."/>
            <person name="Rosenfeld M.G."/>
            <person name="Perissi V."/>
        </authorList>
    </citation>
    <scope>FUNCTION</scope>
</reference>
<comment type="function">
    <text evidence="3 9">Histone demethylase that specifically demethylates 'Lys-9' and 'Lys-36' residues of histone H3, thereby playing a central role in histone code (PubMed:24953653). Does not demethylate histone H3 'Lys-4', H3 'Lys-27' nor H4 'Lys-20'. Demethylates trimethylated H3 'Lys-9' and H3 'Lys-36' residue, while it has no activity on mono- and dimethylated residues. Demethylation of Lys residue generates formaldehyde and succinate. Participates in transcriptional repression of ASCL2 and E2F-responsive promoters via the recruitment of histone deacetylases and NCOR1, respectively (By similarity).</text>
</comment>
<comment type="catalytic activity">
    <reaction evidence="3">
        <text>N(6),N(6),N(6)-trimethyl-L-lysyl(9)-[histone H3] + 2 2-oxoglutarate + 2 O2 = N(6)-methyl-L-lysyl(9)-[histone H3] + 2 formaldehyde + 2 succinate + 2 CO2</text>
        <dbReference type="Rhea" id="RHEA:60200"/>
        <dbReference type="Rhea" id="RHEA-COMP:15538"/>
        <dbReference type="Rhea" id="RHEA-COMP:15542"/>
        <dbReference type="ChEBI" id="CHEBI:15379"/>
        <dbReference type="ChEBI" id="CHEBI:16526"/>
        <dbReference type="ChEBI" id="CHEBI:16810"/>
        <dbReference type="ChEBI" id="CHEBI:16842"/>
        <dbReference type="ChEBI" id="CHEBI:30031"/>
        <dbReference type="ChEBI" id="CHEBI:61929"/>
        <dbReference type="ChEBI" id="CHEBI:61961"/>
        <dbReference type="EC" id="1.14.11.66"/>
    </reaction>
</comment>
<comment type="catalytic activity">
    <reaction evidence="3">
        <text>N(6),N(6),N(6)-trimethyl-L-lysyl(36)-[histone H3] + 2 2-oxoglutarate + 2 O2 = N(6)-methyl-L-lysyl(36)-[histone H3] + 2 formaldehyde + 2 succinate + 2 CO2</text>
        <dbReference type="Rhea" id="RHEA:60236"/>
        <dbReference type="Rhea" id="RHEA-COMP:9786"/>
        <dbReference type="Rhea" id="RHEA-COMP:15536"/>
        <dbReference type="ChEBI" id="CHEBI:15379"/>
        <dbReference type="ChEBI" id="CHEBI:16526"/>
        <dbReference type="ChEBI" id="CHEBI:16810"/>
        <dbReference type="ChEBI" id="CHEBI:16842"/>
        <dbReference type="ChEBI" id="CHEBI:30031"/>
        <dbReference type="ChEBI" id="CHEBI:61929"/>
        <dbReference type="ChEBI" id="CHEBI:61961"/>
        <dbReference type="EC" id="1.14.11.69"/>
    </reaction>
</comment>
<comment type="cofactor">
    <cofactor evidence="3">
        <name>Fe(2+)</name>
        <dbReference type="ChEBI" id="CHEBI:29033"/>
    </cofactor>
    <text evidence="3">Binds 1 Fe(2+) ion per subunit.</text>
</comment>
<comment type="subunit">
    <text evidence="3">Interacts with histone deacetylase proteins HDAC1, HDAC2 and HDAC3. Interacts with RB and NCOR1 (By similarity). Interacts with VRK1 (By similarity).</text>
</comment>
<comment type="subcellular location">
    <subcellularLocation>
        <location evidence="4">Nucleus</location>
    </subcellularLocation>
</comment>
<comment type="alternative products">
    <event type="alternative splicing"/>
    <isoform>
        <id>Q8BW72-1</id>
        <name>1</name>
        <sequence type="displayed"/>
    </isoform>
    <isoform>
        <id>Q8BW72-2</id>
        <name>2</name>
        <sequence type="described" ref="VSP_016144 VSP_016145"/>
    </isoform>
</comment>
<comment type="tissue specificity">
    <text evidence="8">Widely expressed.</text>
</comment>
<comment type="domain">
    <text evidence="3">The 2 Tudor domains recognize and bind methylated histone H3 'Lys-4' residue (H3K4me). Double Tudor domain has an interdigitated structure and the unusual fold is required for its ability to bind methylated histone tails. Trimethylated H3 'Lys-4' (H3K4me3) is bound in a cage of 3 aromatic residues, 2 of which are from the Tudor domain 2, while the binding specificity is determined by side-chain interactions involving residues from the Tudor domain 1. The Tudor domains are also able to bind trimethylated histone H3 'Lys-9' (H3K9me3), di- and trimethylated H4 'Lys-20' (H4K20me2 and H4K20me3). Has high affinity for H4K20me2, blocking recruitment of proteins such as TP53BP1 (By similarity).</text>
</comment>
<comment type="PTM">
    <text evidence="3 9">Ubiquitinated by RNF8 and RNF168, leading to its degradation (PubMed:24953653). Degradation promotes accessibility of H4K20me2 mark for DNA repair protein TP53BP1, which is then recruited (By similarity). Also ubiquitinated by the SCF(FBXO22) complex; leading to proteasomal degradation (By similarity).</text>
</comment>
<comment type="similarity">
    <text evidence="11">Belongs to the JHDM3 histone demethylase family.</text>
</comment>
<comment type="sequence caution" evidence="11">
    <conflict type="erroneous initiation">
        <sequence resource="EMBL-CDS" id="BAC97997"/>
    </conflict>
    <text>Extended N-terminus.</text>
</comment>
<gene>
    <name type="primary">Kdm4a</name>
    <name type="synonym">Jhdm3a</name>
    <name type="synonym">Jmjd2</name>
    <name type="synonym">Jmjd2a</name>
    <name type="synonym">Kiaa0677</name>
</gene>